<dbReference type="EMBL" id="CP001164">
    <property type="protein sequence ID" value="ACI35441.1"/>
    <property type="molecule type" value="Genomic_DNA"/>
</dbReference>
<dbReference type="RefSeq" id="WP_000148581.1">
    <property type="nucleotide sequence ID" value="NC_011353.1"/>
</dbReference>
<dbReference type="SMR" id="B5Z3K2"/>
<dbReference type="GeneID" id="93777580"/>
<dbReference type="KEGG" id="ecf:ECH74115_5766"/>
<dbReference type="HOGENOM" id="CLU_128576_0_0_6"/>
<dbReference type="GO" id="GO:0009347">
    <property type="term" value="C:aspartate carbamoyltransferase complex"/>
    <property type="evidence" value="ECO:0007669"/>
    <property type="project" value="InterPro"/>
</dbReference>
<dbReference type="GO" id="GO:0046872">
    <property type="term" value="F:metal ion binding"/>
    <property type="evidence" value="ECO:0007669"/>
    <property type="project" value="UniProtKB-KW"/>
</dbReference>
<dbReference type="GO" id="GO:0006207">
    <property type="term" value="P:'de novo' pyrimidine nucleobase biosynthetic process"/>
    <property type="evidence" value="ECO:0007669"/>
    <property type="project" value="InterPro"/>
</dbReference>
<dbReference type="GO" id="GO:0006221">
    <property type="term" value="P:pyrimidine nucleotide biosynthetic process"/>
    <property type="evidence" value="ECO:0007669"/>
    <property type="project" value="UniProtKB-UniRule"/>
</dbReference>
<dbReference type="FunFam" id="2.30.30.20:FF:000001">
    <property type="entry name" value="Aspartate carbamoyltransferase regulatory chain"/>
    <property type="match status" value="1"/>
</dbReference>
<dbReference type="FunFam" id="3.30.70.140:FF:000001">
    <property type="entry name" value="Aspartate carbamoyltransferase regulatory chain"/>
    <property type="match status" value="1"/>
</dbReference>
<dbReference type="Gene3D" id="2.30.30.20">
    <property type="entry name" value="Aspartate carbamoyltransferase regulatory subunit, C-terminal domain"/>
    <property type="match status" value="1"/>
</dbReference>
<dbReference type="Gene3D" id="3.30.70.140">
    <property type="entry name" value="Aspartate carbamoyltransferase regulatory subunit, N-terminal domain"/>
    <property type="match status" value="1"/>
</dbReference>
<dbReference type="HAMAP" id="MF_00002">
    <property type="entry name" value="Asp_carb_tr_reg"/>
    <property type="match status" value="1"/>
</dbReference>
<dbReference type="InterPro" id="IPR020545">
    <property type="entry name" value="Asp_carbamoyltransf_reg_N"/>
</dbReference>
<dbReference type="InterPro" id="IPR002801">
    <property type="entry name" value="Asp_carbamoylTrfase_reg"/>
</dbReference>
<dbReference type="InterPro" id="IPR020542">
    <property type="entry name" value="Asp_carbamoyltrfase_reg_C"/>
</dbReference>
<dbReference type="InterPro" id="IPR036792">
    <property type="entry name" value="Asp_carbatrfase_reg_C_sf"/>
</dbReference>
<dbReference type="InterPro" id="IPR036793">
    <property type="entry name" value="Asp_carbatrfase_reg_N_sf"/>
</dbReference>
<dbReference type="NCBIfam" id="TIGR00240">
    <property type="entry name" value="ATCase_reg"/>
    <property type="match status" value="1"/>
</dbReference>
<dbReference type="PANTHER" id="PTHR35805">
    <property type="entry name" value="ASPARTATE CARBAMOYLTRANSFERASE REGULATORY CHAIN"/>
    <property type="match status" value="1"/>
</dbReference>
<dbReference type="PANTHER" id="PTHR35805:SF1">
    <property type="entry name" value="ASPARTATE CARBAMOYLTRANSFERASE REGULATORY CHAIN"/>
    <property type="match status" value="1"/>
</dbReference>
<dbReference type="Pfam" id="PF01948">
    <property type="entry name" value="PyrI"/>
    <property type="match status" value="1"/>
</dbReference>
<dbReference type="Pfam" id="PF02748">
    <property type="entry name" value="PyrI_C"/>
    <property type="match status" value="1"/>
</dbReference>
<dbReference type="SUPFAM" id="SSF57825">
    <property type="entry name" value="Aspartate carbamoyltransferase, Regulatory-chain, C-terminal domain"/>
    <property type="match status" value="1"/>
</dbReference>
<dbReference type="SUPFAM" id="SSF54893">
    <property type="entry name" value="Aspartate carbamoyltransferase, Regulatory-chain, N-terminal domain"/>
    <property type="match status" value="1"/>
</dbReference>
<gene>
    <name evidence="1" type="primary">pyrI</name>
    <name type="ordered locus">ECH74115_5766</name>
</gene>
<comment type="function">
    <text evidence="1">Involved in allosteric regulation of aspartate carbamoyltransferase.</text>
</comment>
<comment type="cofactor">
    <cofactor evidence="1">
        <name>Zn(2+)</name>
        <dbReference type="ChEBI" id="CHEBI:29105"/>
    </cofactor>
    <text evidence="1">Binds 1 zinc ion per subunit.</text>
</comment>
<comment type="subunit">
    <text evidence="1">Contains catalytic and regulatory chains.</text>
</comment>
<comment type="similarity">
    <text evidence="1">Belongs to the PyrI family.</text>
</comment>
<protein>
    <recommendedName>
        <fullName evidence="1">Aspartate carbamoyltransferase regulatory chain</fullName>
    </recommendedName>
</protein>
<sequence>MTHDNKLQVEAIKRGTVIDHIPAQIGFKLLSLFKLTETDQRITIGLNLPSGEMGRKDLIKIENTFLSEDQVDQLALYAPQATVNRIDNYEVVGKSRPSLPERIDNVLVCPNSNCISHAEPVSSSFAVRKRANDIALKCKYCEKEFSHNVVLAN</sequence>
<feature type="chain" id="PRO_1000088823" description="Aspartate carbamoyltransferase regulatory chain">
    <location>
        <begin position="1"/>
        <end position="153"/>
    </location>
</feature>
<feature type="binding site" evidence="1">
    <location>
        <position position="109"/>
    </location>
    <ligand>
        <name>Zn(2+)</name>
        <dbReference type="ChEBI" id="CHEBI:29105"/>
    </ligand>
</feature>
<feature type="binding site" evidence="1">
    <location>
        <position position="114"/>
    </location>
    <ligand>
        <name>Zn(2+)</name>
        <dbReference type="ChEBI" id="CHEBI:29105"/>
    </ligand>
</feature>
<feature type="binding site" evidence="1">
    <location>
        <position position="138"/>
    </location>
    <ligand>
        <name>Zn(2+)</name>
        <dbReference type="ChEBI" id="CHEBI:29105"/>
    </ligand>
</feature>
<feature type="binding site" evidence="1">
    <location>
        <position position="141"/>
    </location>
    <ligand>
        <name>Zn(2+)</name>
        <dbReference type="ChEBI" id="CHEBI:29105"/>
    </ligand>
</feature>
<reference key="1">
    <citation type="journal article" date="2011" name="Proc. Natl. Acad. Sci. U.S.A.">
        <title>Genomic anatomy of Escherichia coli O157:H7 outbreaks.</title>
        <authorList>
            <person name="Eppinger M."/>
            <person name="Mammel M.K."/>
            <person name="Leclerc J.E."/>
            <person name="Ravel J."/>
            <person name="Cebula T.A."/>
        </authorList>
    </citation>
    <scope>NUCLEOTIDE SEQUENCE [LARGE SCALE GENOMIC DNA]</scope>
    <source>
        <strain>EC4115 / EHEC</strain>
    </source>
</reference>
<evidence type="ECO:0000255" key="1">
    <source>
        <dbReference type="HAMAP-Rule" id="MF_00002"/>
    </source>
</evidence>
<organism>
    <name type="scientific">Escherichia coli O157:H7 (strain EC4115 / EHEC)</name>
    <dbReference type="NCBI Taxonomy" id="444450"/>
    <lineage>
        <taxon>Bacteria</taxon>
        <taxon>Pseudomonadati</taxon>
        <taxon>Pseudomonadota</taxon>
        <taxon>Gammaproteobacteria</taxon>
        <taxon>Enterobacterales</taxon>
        <taxon>Enterobacteriaceae</taxon>
        <taxon>Escherichia</taxon>
    </lineage>
</organism>
<accession>B5Z3K2</accession>
<proteinExistence type="inferred from homology"/>
<name>PYRI_ECO5E</name>
<keyword id="KW-0479">Metal-binding</keyword>
<keyword id="KW-0665">Pyrimidine biosynthesis</keyword>
<keyword id="KW-0862">Zinc</keyword>